<proteinExistence type="inferred from homology"/>
<protein>
    <recommendedName>
        <fullName>U3 small nucleolar RNA-associated protein 25</fullName>
        <shortName>U3 snoRNA-associated protein 25</shortName>
    </recommendedName>
    <alternativeName>
        <fullName>U three protein 25</fullName>
    </alternativeName>
</protein>
<evidence type="ECO:0000250" key="1"/>
<evidence type="ECO:0000256" key="2">
    <source>
        <dbReference type="SAM" id="MobiDB-lite"/>
    </source>
</evidence>
<evidence type="ECO:0000305" key="3"/>
<reference key="1">
    <citation type="journal article" date="2009" name="Nature">
        <title>Evolution of pathogenicity and sexual reproduction in eight Candida genomes.</title>
        <authorList>
            <person name="Butler G."/>
            <person name="Rasmussen M.D."/>
            <person name="Lin M.F."/>
            <person name="Santos M.A.S."/>
            <person name="Sakthikumar S."/>
            <person name="Munro C.A."/>
            <person name="Rheinbay E."/>
            <person name="Grabherr M."/>
            <person name="Forche A."/>
            <person name="Reedy J.L."/>
            <person name="Agrafioti I."/>
            <person name="Arnaud M.B."/>
            <person name="Bates S."/>
            <person name="Brown A.J.P."/>
            <person name="Brunke S."/>
            <person name="Costanzo M.C."/>
            <person name="Fitzpatrick D.A."/>
            <person name="de Groot P.W.J."/>
            <person name="Harris D."/>
            <person name="Hoyer L.L."/>
            <person name="Hube B."/>
            <person name="Klis F.M."/>
            <person name="Kodira C."/>
            <person name="Lennard N."/>
            <person name="Logue M.E."/>
            <person name="Martin R."/>
            <person name="Neiman A.M."/>
            <person name="Nikolaou E."/>
            <person name="Quail M.A."/>
            <person name="Quinn J."/>
            <person name="Santos M.C."/>
            <person name="Schmitzberger F.F."/>
            <person name="Sherlock G."/>
            <person name="Shah P."/>
            <person name="Silverstein K.A.T."/>
            <person name="Skrzypek M.S."/>
            <person name="Soll D."/>
            <person name="Staggs R."/>
            <person name="Stansfield I."/>
            <person name="Stumpf M.P.H."/>
            <person name="Sudbery P.E."/>
            <person name="Srikantha T."/>
            <person name="Zeng Q."/>
            <person name="Berman J."/>
            <person name="Berriman M."/>
            <person name="Heitman J."/>
            <person name="Gow N.A.R."/>
            <person name="Lorenz M.C."/>
            <person name="Birren B.W."/>
            <person name="Kellis M."/>
            <person name="Cuomo C.A."/>
        </authorList>
    </citation>
    <scope>NUCLEOTIDE SEQUENCE [LARGE SCALE GENOMIC DNA]</scope>
    <source>
        <strain>ATCC MYA-3404 / T1</strain>
    </source>
</reference>
<organism>
    <name type="scientific">Candida tropicalis (strain ATCC MYA-3404 / T1)</name>
    <name type="common">Yeast</name>
    <dbReference type="NCBI Taxonomy" id="294747"/>
    <lineage>
        <taxon>Eukaryota</taxon>
        <taxon>Fungi</taxon>
        <taxon>Dikarya</taxon>
        <taxon>Ascomycota</taxon>
        <taxon>Saccharomycotina</taxon>
        <taxon>Pichiomycetes</taxon>
        <taxon>Debaryomycetaceae</taxon>
        <taxon>Candida/Lodderomyces clade</taxon>
        <taxon>Candida</taxon>
    </lineage>
</organism>
<comment type="function">
    <text evidence="1">DEAD-box RNA helicase-like protein required for pre-18S rRNA processing, specifically at sites A0, A1, and A2.</text>
</comment>
<comment type="subunit">
    <text evidence="1">Component of the ribosomal small subunit (SSU) processome composed of at least 40 protein subunits and snoRNA U3.</text>
</comment>
<comment type="subcellular location">
    <subcellularLocation>
        <location evidence="1">Nucleus</location>
        <location evidence="1">Nucleolus</location>
    </subcellularLocation>
</comment>
<comment type="similarity">
    <text evidence="3">Belongs to the UTP25 family.</text>
</comment>
<keyword id="KW-0539">Nucleus</keyword>
<keyword id="KW-1185">Reference proteome</keyword>
<keyword id="KW-0687">Ribonucleoprotein</keyword>
<keyword id="KW-0690">Ribosome biogenesis</keyword>
<keyword id="KW-0698">rRNA processing</keyword>
<dbReference type="EMBL" id="GG692395">
    <property type="protein sequence ID" value="EER35940.1"/>
    <property type="molecule type" value="Genomic_DNA"/>
</dbReference>
<dbReference type="RefSeq" id="XP_002545898.1">
    <property type="nucleotide sequence ID" value="XM_002545852.1"/>
</dbReference>
<dbReference type="STRING" id="294747.C5M3P0"/>
<dbReference type="EnsemblFungi" id="CTRG_00679-t43_1">
    <property type="protein sequence ID" value="CTRG_00679-t43_1-p1"/>
    <property type="gene ID" value="CTRG_00679"/>
</dbReference>
<dbReference type="GeneID" id="8296893"/>
<dbReference type="KEGG" id="ctp:CTRG_00679"/>
<dbReference type="VEuPathDB" id="FungiDB:CTRG_00679"/>
<dbReference type="eggNOG" id="KOG2340">
    <property type="taxonomic scope" value="Eukaryota"/>
</dbReference>
<dbReference type="HOGENOM" id="CLU_018705_0_1_1"/>
<dbReference type="OrthoDB" id="10264378at2759"/>
<dbReference type="Proteomes" id="UP000002037">
    <property type="component" value="Unassembled WGS sequence"/>
</dbReference>
<dbReference type="GO" id="GO:0005730">
    <property type="term" value="C:nucleolus"/>
    <property type="evidence" value="ECO:0007669"/>
    <property type="project" value="UniProtKB-SubCell"/>
</dbReference>
<dbReference type="GO" id="GO:0032040">
    <property type="term" value="C:small-subunit processome"/>
    <property type="evidence" value="ECO:0007669"/>
    <property type="project" value="EnsemblFungi"/>
</dbReference>
<dbReference type="GO" id="GO:0019843">
    <property type="term" value="F:rRNA binding"/>
    <property type="evidence" value="ECO:0007669"/>
    <property type="project" value="EnsemblFungi"/>
</dbReference>
<dbReference type="GO" id="GO:0034511">
    <property type="term" value="F:U3 snoRNA binding"/>
    <property type="evidence" value="ECO:0007669"/>
    <property type="project" value="EnsemblFungi"/>
</dbReference>
<dbReference type="GO" id="GO:0000462">
    <property type="term" value="P:maturation of SSU-rRNA from tricistronic rRNA transcript (SSU-rRNA, 5.8S rRNA, LSU-rRNA)"/>
    <property type="evidence" value="ECO:0007669"/>
    <property type="project" value="EnsemblFungi"/>
</dbReference>
<dbReference type="Gene3D" id="3.40.50.300">
    <property type="entry name" value="P-loop containing nucleotide triphosphate hydrolases"/>
    <property type="match status" value="1"/>
</dbReference>
<dbReference type="InterPro" id="IPR027417">
    <property type="entry name" value="P-loop_NTPase"/>
</dbReference>
<dbReference type="InterPro" id="IPR010678">
    <property type="entry name" value="UTP25"/>
</dbReference>
<dbReference type="InterPro" id="IPR053939">
    <property type="entry name" value="UTP25_C"/>
</dbReference>
<dbReference type="InterPro" id="IPR053940">
    <property type="entry name" value="UTP25_NTPase-like"/>
</dbReference>
<dbReference type="PANTHER" id="PTHR12933">
    <property type="entry name" value="ORF PROTEIN-RELATED"/>
    <property type="match status" value="1"/>
</dbReference>
<dbReference type="PANTHER" id="PTHR12933:SF0">
    <property type="entry name" value="U3 SMALL NUCLEOLAR RNA-ASSOCIATED PROTEIN 25 HOMOLOG"/>
    <property type="match status" value="1"/>
</dbReference>
<dbReference type="Pfam" id="PF06862">
    <property type="entry name" value="Utp25_C"/>
    <property type="match status" value="1"/>
</dbReference>
<dbReference type="Pfam" id="PF22916">
    <property type="entry name" value="UTP25_NTPase-like"/>
    <property type="match status" value="1"/>
</dbReference>
<name>UTP25_CANTT</name>
<accession>C5M3P0</accession>
<feature type="chain" id="PRO_0000408111" description="U3 small nucleolar RNA-associated protein 25">
    <location>
        <begin position="1"/>
        <end position="710"/>
    </location>
</feature>
<feature type="region of interest" description="Disordered" evidence="2">
    <location>
        <begin position="1"/>
        <end position="150"/>
    </location>
</feature>
<feature type="compositionally biased region" description="Basic and acidic residues" evidence="2">
    <location>
        <begin position="16"/>
        <end position="28"/>
    </location>
</feature>
<feature type="compositionally biased region" description="Acidic residues" evidence="2">
    <location>
        <begin position="61"/>
        <end position="75"/>
    </location>
</feature>
<feature type="compositionally biased region" description="Basic and acidic residues" evidence="2">
    <location>
        <begin position="89"/>
        <end position="109"/>
    </location>
</feature>
<feature type="compositionally biased region" description="Acidic residues" evidence="2">
    <location>
        <begin position="123"/>
        <end position="143"/>
    </location>
</feature>
<gene>
    <name type="primary">UTP25</name>
    <name type="ORF">CTRG_00679</name>
</gene>
<sequence length="710" mass="82456">MAKQVKRKSSGITKPDGNRKRGRSEMRTVTRTAARKPRDEEQDDDSSDHSEEEAVHQSNGDDYEDTDGENDEDEDSGKAYSALLTLLKTDNKEKKEKPESFSIEEKDQPSEDENEVAGVVSDNENEDENEEDQQISDNEEEEEVKGLASDPFEVHFNLPSDDYLNKEEKLVLKDHEKWPIVDKKTYADLALTSMLQLPPGEQIEPPLLKSTKLKDYAIKKRVLDSYEKAYGLDLTETDSLIANSILNYRDVNYQYKTFTNKNYRRIYVMHALNHIYKTRDRILKNTTKLHVHKESSNDEDLEFRDQGFTRPKVLIMLPTRNSCYEVVEQLIKLSGTDQQENKKKFNDQFYAKAAPPNNKPEDFKDAFKGNNSDFFCIGLKMTRKSLKLYSSFYSSDIILASPIGLSMILENPDKKKRQYDFLSSIEVLIVDKSNQIEMQNWDHVNTVMNYINKVPKEFHDADFSRIRMWSINDQARLLRQTLVFCEYLTPSINNLVSSKSFNLSGKVKFKPIINSEKSMMNSIGLKIKQIFQRFESGSPVQDPDARFKFFINTILPSLLKTSSYEDGIMIFIPSYFDYLRVKNYLKTSTKFDFGSIDEYTSQSKLTRTRQGFASGKIKLILYTERLHYFRRYEISGVKTLIMYGLPSNPLFYKELIRFIGKSVFKEECELDLALVKILFSKWDAVNLEKIVGNERAPILCNSMNELYEFR</sequence>